<feature type="chain" id="PRO_1000120882" description="NAD kinase">
    <location>
        <begin position="1"/>
        <end position="292"/>
    </location>
</feature>
<feature type="active site" description="Proton acceptor" evidence="1">
    <location>
        <position position="73"/>
    </location>
</feature>
<feature type="binding site" evidence="1">
    <location>
        <begin position="73"/>
        <end position="74"/>
    </location>
    <ligand>
        <name>NAD(+)</name>
        <dbReference type="ChEBI" id="CHEBI:57540"/>
    </ligand>
</feature>
<feature type="binding site" evidence="1">
    <location>
        <begin position="147"/>
        <end position="148"/>
    </location>
    <ligand>
        <name>NAD(+)</name>
        <dbReference type="ChEBI" id="CHEBI:57540"/>
    </ligand>
</feature>
<feature type="binding site" evidence="1">
    <location>
        <position position="158"/>
    </location>
    <ligand>
        <name>NAD(+)</name>
        <dbReference type="ChEBI" id="CHEBI:57540"/>
    </ligand>
</feature>
<feature type="binding site" evidence="1">
    <location>
        <position position="175"/>
    </location>
    <ligand>
        <name>NAD(+)</name>
        <dbReference type="ChEBI" id="CHEBI:57540"/>
    </ligand>
</feature>
<feature type="binding site" evidence="1">
    <location>
        <position position="177"/>
    </location>
    <ligand>
        <name>NAD(+)</name>
        <dbReference type="ChEBI" id="CHEBI:57540"/>
    </ligand>
</feature>
<feature type="binding site" evidence="1">
    <location>
        <begin position="188"/>
        <end position="193"/>
    </location>
    <ligand>
        <name>NAD(+)</name>
        <dbReference type="ChEBI" id="CHEBI:57540"/>
    </ligand>
</feature>
<feature type="binding site" evidence="1">
    <location>
        <position position="247"/>
    </location>
    <ligand>
        <name>NAD(+)</name>
        <dbReference type="ChEBI" id="CHEBI:57540"/>
    </ligand>
</feature>
<evidence type="ECO:0000255" key="1">
    <source>
        <dbReference type="HAMAP-Rule" id="MF_00361"/>
    </source>
</evidence>
<proteinExistence type="inferred from homology"/>
<name>NADK_SALEP</name>
<gene>
    <name evidence="1" type="primary">nadK</name>
    <name type="ordered locus">SEN2603</name>
</gene>
<protein>
    <recommendedName>
        <fullName evidence="1">NAD kinase</fullName>
        <ecNumber evidence="1">2.7.1.23</ecNumber>
    </recommendedName>
    <alternativeName>
        <fullName evidence="1">ATP-dependent NAD kinase</fullName>
    </alternativeName>
</protein>
<sequence length="292" mass="32539">MNNHFKCIGIVGHPRHPTALTTHEMLYRWLCAQGYEVIVEQQIAHELQLKNVPTGTLAEIGQQADLAVVVGGDGNMLGAARTLARYNINVIGINRGNLGFLTDLDPDNALQQLSDVLEGRYISEKRFLLEAQVCQQDRQKRISTAINEVVLHPGKVAHMIEFEVYIDETFAFSQRSDGLIISTPTGSTAYSLSAGGPILTPSLDAITLVPMFPHTLSARPLVINSSSTIRLRFSHRRSDLEISCDSQIALPIQEGEDVLIRRCDYHLNLIHPKDYSYFNTLSTKLGWSKKLF</sequence>
<comment type="function">
    <text evidence="1">Involved in the regulation of the intracellular balance of NAD and NADP, and is a key enzyme in the biosynthesis of NADP. Catalyzes specifically the phosphorylation on 2'-hydroxyl of the adenosine moiety of NAD to yield NADP.</text>
</comment>
<comment type="catalytic activity">
    <reaction evidence="1">
        <text>NAD(+) + ATP = ADP + NADP(+) + H(+)</text>
        <dbReference type="Rhea" id="RHEA:18629"/>
        <dbReference type="ChEBI" id="CHEBI:15378"/>
        <dbReference type="ChEBI" id="CHEBI:30616"/>
        <dbReference type="ChEBI" id="CHEBI:57540"/>
        <dbReference type="ChEBI" id="CHEBI:58349"/>
        <dbReference type="ChEBI" id="CHEBI:456216"/>
        <dbReference type="EC" id="2.7.1.23"/>
    </reaction>
</comment>
<comment type="cofactor">
    <cofactor evidence="1">
        <name>a divalent metal cation</name>
        <dbReference type="ChEBI" id="CHEBI:60240"/>
    </cofactor>
</comment>
<comment type="subcellular location">
    <subcellularLocation>
        <location evidence="1">Cytoplasm</location>
    </subcellularLocation>
</comment>
<comment type="similarity">
    <text evidence="1">Belongs to the NAD kinase family.</text>
</comment>
<keyword id="KW-0067">ATP-binding</keyword>
<keyword id="KW-0963">Cytoplasm</keyword>
<keyword id="KW-0418">Kinase</keyword>
<keyword id="KW-0520">NAD</keyword>
<keyword id="KW-0521">NADP</keyword>
<keyword id="KW-0547">Nucleotide-binding</keyword>
<keyword id="KW-0808">Transferase</keyword>
<organism>
    <name type="scientific">Salmonella enteritidis PT4 (strain P125109)</name>
    <dbReference type="NCBI Taxonomy" id="550537"/>
    <lineage>
        <taxon>Bacteria</taxon>
        <taxon>Pseudomonadati</taxon>
        <taxon>Pseudomonadota</taxon>
        <taxon>Gammaproteobacteria</taxon>
        <taxon>Enterobacterales</taxon>
        <taxon>Enterobacteriaceae</taxon>
        <taxon>Salmonella</taxon>
    </lineage>
</organism>
<reference key="1">
    <citation type="journal article" date="2008" name="Genome Res.">
        <title>Comparative genome analysis of Salmonella enteritidis PT4 and Salmonella gallinarum 287/91 provides insights into evolutionary and host adaptation pathways.</title>
        <authorList>
            <person name="Thomson N.R."/>
            <person name="Clayton D.J."/>
            <person name="Windhorst D."/>
            <person name="Vernikos G."/>
            <person name="Davidson S."/>
            <person name="Churcher C."/>
            <person name="Quail M.A."/>
            <person name="Stevens M."/>
            <person name="Jones M.A."/>
            <person name="Watson M."/>
            <person name="Barron A."/>
            <person name="Layton A."/>
            <person name="Pickard D."/>
            <person name="Kingsley R.A."/>
            <person name="Bignell A."/>
            <person name="Clark L."/>
            <person name="Harris B."/>
            <person name="Ormond D."/>
            <person name="Abdellah Z."/>
            <person name="Brooks K."/>
            <person name="Cherevach I."/>
            <person name="Chillingworth T."/>
            <person name="Woodward J."/>
            <person name="Norberczak H."/>
            <person name="Lord A."/>
            <person name="Arrowsmith C."/>
            <person name="Jagels K."/>
            <person name="Moule S."/>
            <person name="Mungall K."/>
            <person name="Saunders M."/>
            <person name="Whitehead S."/>
            <person name="Chabalgoity J.A."/>
            <person name="Maskell D."/>
            <person name="Humphreys T."/>
            <person name="Roberts M."/>
            <person name="Barrow P.A."/>
            <person name="Dougan G."/>
            <person name="Parkhill J."/>
        </authorList>
    </citation>
    <scope>NUCLEOTIDE SEQUENCE [LARGE SCALE GENOMIC DNA]</scope>
    <source>
        <strain>P125109</strain>
    </source>
</reference>
<accession>B5QUH0</accession>
<dbReference type="EC" id="2.7.1.23" evidence="1"/>
<dbReference type="EMBL" id="AM933172">
    <property type="protein sequence ID" value="CAR34185.1"/>
    <property type="molecule type" value="Genomic_DNA"/>
</dbReference>
<dbReference type="RefSeq" id="WP_001059151.1">
    <property type="nucleotide sequence ID" value="NC_011294.1"/>
</dbReference>
<dbReference type="SMR" id="B5QUH0"/>
<dbReference type="KEGG" id="set:SEN2603"/>
<dbReference type="HOGENOM" id="CLU_008831_0_1_6"/>
<dbReference type="Proteomes" id="UP000000613">
    <property type="component" value="Chromosome"/>
</dbReference>
<dbReference type="GO" id="GO:0005737">
    <property type="term" value="C:cytoplasm"/>
    <property type="evidence" value="ECO:0007669"/>
    <property type="project" value="UniProtKB-SubCell"/>
</dbReference>
<dbReference type="GO" id="GO:0005524">
    <property type="term" value="F:ATP binding"/>
    <property type="evidence" value="ECO:0007669"/>
    <property type="project" value="UniProtKB-KW"/>
</dbReference>
<dbReference type="GO" id="GO:0046872">
    <property type="term" value="F:metal ion binding"/>
    <property type="evidence" value="ECO:0007669"/>
    <property type="project" value="UniProtKB-UniRule"/>
</dbReference>
<dbReference type="GO" id="GO:0051287">
    <property type="term" value="F:NAD binding"/>
    <property type="evidence" value="ECO:0007669"/>
    <property type="project" value="UniProtKB-ARBA"/>
</dbReference>
<dbReference type="GO" id="GO:0003951">
    <property type="term" value="F:NAD+ kinase activity"/>
    <property type="evidence" value="ECO:0007669"/>
    <property type="project" value="UniProtKB-UniRule"/>
</dbReference>
<dbReference type="GO" id="GO:0019674">
    <property type="term" value="P:NAD metabolic process"/>
    <property type="evidence" value="ECO:0007669"/>
    <property type="project" value="InterPro"/>
</dbReference>
<dbReference type="GO" id="GO:0006741">
    <property type="term" value="P:NADP biosynthetic process"/>
    <property type="evidence" value="ECO:0007669"/>
    <property type="project" value="UniProtKB-UniRule"/>
</dbReference>
<dbReference type="FunFam" id="2.60.200.30:FF:000001">
    <property type="entry name" value="NAD kinase"/>
    <property type="match status" value="1"/>
</dbReference>
<dbReference type="FunFam" id="3.40.50.10330:FF:000004">
    <property type="entry name" value="NAD kinase"/>
    <property type="match status" value="1"/>
</dbReference>
<dbReference type="Gene3D" id="3.40.50.10330">
    <property type="entry name" value="Probable inorganic polyphosphate/atp-NAD kinase, domain 1"/>
    <property type="match status" value="1"/>
</dbReference>
<dbReference type="Gene3D" id="2.60.200.30">
    <property type="entry name" value="Probable inorganic polyphosphate/atp-NAD kinase, domain 2"/>
    <property type="match status" value="1"/>
</dbReference>
<dbReference type="HAMAP" id="MF_00361">
    <property type="entry name" value="NAD_kinase"/>
    <property type="match status" value="1"/>
</dbReference>
<dbReference type="InterPro" id="IPR017438">
    <property type="entry name" value="ATP-NAD_kinase_N"/>
</dbReference>
<dbReference type="InterPro" id="IPR017437">
    <property type="entry name" value="ATP-NAD_kinase_PpnK-typ_C"/>
</dbReference>
<dbReference type="InterPro" id="IPR016064">
    <property type="entry name" value="NAD/diacylglycerol_kinase_sf"/>
</dbReference>
<dbReference type="InterPro" id="IPR002504">
    <property type="entry name" value="NADK"/>
</dbReference>
<dbReference type="NCBIfam" id="NF002306">
    <property type="entry name" value="PRK01231.1"/>
    <property type="match status" value="1"/>
</dbReference>
<dbReference type="NCBIfam" id="NF002893">
    <property type="entry name" value="PRK03378.1"/>
    <property type="match status" value="1"/>
</dbReference>
<dbReference type="PANTHER" id="PTHR20275">
    <property type="entry name" value="NAD KINASE"/>
    <property type="match status" value="1"/>
</dbReference>
<dbReference type="PANTHER" id="PTHR20275:SF0">
    <property type="entry name" value="NAD KINASE"/>
    <property type="match status" value="1"/>
</dbReference>
<dbReference type="Pfam" id="PF01513">
    <property type="entry name" value="NAD_kinase"/>
    <property type="match status" value="1"/>
</dbReference>
<dbReference type="Pfam" id="PF20143">
    <property type="entry name" value="NAD_kinase_C"/>
    <property type="match status" value="1"/>
</dbReference>
<dbReference type="SUPFAM" id="SSF111331">
    <property type="entry name" value="NAD kinase/diacylglycerol kinase-like"/>
    <property type="match status" value="1"/>
</dbReference>